<dbReference type="EMBL" id="D61392">
    <property type="protein sequence ID" value="BAA09613.1"/>
    <property type="molecule type" value="Genomic_DNA"/>
</dbReference>
<dbReference type="RefSeq" id="WP_021449946.1">
    <property type="nucleotide sequence ID" value="NZ_WIBA01000002.1"/>
</dbReference>
<dbReference type="SMR" id="P51002"/>
<dbReference type="STRING" id="670.ACZ92_19990"/>
<dbReference type="TCDB" id="1.B.10.2.1">
    <property type="family name" value="the nucleoside-specific channel-forming outer membrane porin (tsx) family"/>
</dbReference>
<dbReference type="PATRIC" id="fig|670.323.peg.953"/>
<dbReference type="GO" id="GO:0009279">
    <property type="term" value="C:cell outer membrane"/>
    <property type="evidence" value="ECO:0007669"/>
    <property type="project" value="UniProtKB-SubCell"/>
</dbReference>
<dbReference type="Gene3D" id="2.40.230.20">
    <property type="entry name" value="Nucleoside-specific channel-forming protein, Tsx-like"/>
    <property type="match status" value="1"/>
</dbReference>
<dbReference type="InterPro" id="IPR018013">
    <property type="entry name" value="Channel_Tsx-like"/>
</dbReference>
<dbReference type="InterPro" id="IPR036777">
    <property type="entry name" value="Channel_Tsx-like_sf"/>
</dbReference>
<dbReference type="Pfam" id="PF03502">
    <property type="entry name" value="Channel_Tsx"/>
    <property type="match status" value="1"/>
</dbReference>
<dbReference type="SUPFAM" id="SSF111364">
    <property type="entry name" value="Tsx-like channel"/>
    <property type="match status" value="1"/>
</dbReference>
<name>OMPK_VIBPH</name>
<keyword id="KW-0998">Cell outer membrane</keyword>
<keyword id="KW-0472">Membrane</keyword>
<keyword id="KW-0732">Signal</keyword>
<evidence type="ECO:0000255" key="1"/>
<evidence type="ECO:0000269" key="2">
    <source>
    </source>
</evidence>
<evidence type="ECO:0000303" key="3">
    <source>
    </source>
</evidence>
<evidence type="ECO:0000305" key="4"/>
<accession>P51002</accession>
<reference key="1">
    <citation type="journal article" date="1995" name="FEMS Microbiol. Lett.">
        <title>Cloning and sequence analysis of Vibrio parahaemolyticus ompK gene encoding a 26-kDa outer membrane protein, OmpK, that serves as receptor for a broad-host-range vibriophage, KVP40.</title>
        <authorList>
            <person name="Inoue T."/>
            <person name="Matsuzaki S."/>
            <person name="Tanaka S."/>
        </authorList>
    </citation>
    <scope>NUCLEOTIDE SEQUENCE [GENOMIC DNA]</scope>
    <source>
        <strain>ATCC 17802 / DSM 10027 / KCTC 2729 / NBRC 12711 / NCIMB 1902 / LMG 2850 / NCTC 10903 / NRRL B-4167 / EB 101</strain>
    </source>
</reference>
<reference key="2">
    <citation type="journal article" date="1995" name="FEMS Microbiol. Lett.">
        <title>A 26-kDa outer membrane protein, OmpK, common to Vibrio species is the receptor for a broad-host-range vibriophage, KVP40.</title>
        <authorList>
            <person name="Inoue T."/>
            <person name="Matsuzaki S."/>
            <person name="Tanaka S."/>
        </authorList>
    </citation>
    <scope>FUNCTION</scope>
    <scope>SUBCELLULAR LOCATION</scope>
    <source>
        <strain>ATCC 17802 / DSM 10027 / KCTC 2729 / NBRC 12711 / NCIMB 1902 / LMG 2850 / NCTC 10903 / NRRL B-4167 / EB 101</strain>
    </source>
</reference>
<protein>
    <recommendedName>
        <fullName evidence="4">Outer membrane protein OmpK</fullName>
    </recommendedName>
</protein>
<comment type="function">
    <text evidence="2">Serves as receptor for a broad-host-range vibriophage, KVP40.</text>
</comment>
<comment type="subcellular location">
    <subcellularLocation>
        <location evidence="2">Cell outer membrane</location>
    </subcellularLocation>
</comment>
<comment type="similarity">
    <text evidence="4">Belongs to the nucleoside-specific channel-forming outer membrane porin (Tsx) (TC 1.B.10) family.</text>
</comment>
<feature type="signal peptide" evidence="1">
    <location>
        <begin position="1"/>
        <end position="20"/>
    </location>
</feature>
<feature type="chain" id="PRO_0000021895" description="Outer membrane protein OmpK">
    <location>
        <begin position="21"/>
        <end position="263"/>
    </location>
</feature>
<proteinExistence type="inferred from homology"/>
<organism>
    <name type="scientific">Vibrio parahaemolyticus</name>
    <dbReference type="NCBI Taxonomy" id="670"/>
    <lineage>
        <taxon>Bacteria</taxon>
        <taxon>Pseudomonadati</taxon>
        <taxon>Pseudomonadota</taxon>
        <taxon>Gammaproteobacteria</taxon>
        <taxon>Vibrionales</taxon>
        <taxon>Vibrionaceae</taxon>
        <taxon>Vibrio</taxon>
    </lineage>
</organism>
<gene>
    <name evidence="3" type="primary">ompK</name>
</gene>
<sequence>MRKSLLALSLLAATSAPVLAADYSDGDIHKNDYKWMQFNLMGAFNELPGFPDGSNHDYLEMEFGGRSGIFDLYGYVDVFNLASDPGSDKSGKEKIFMKFAPRMSLDAVTGKDLSFGPVQELYVSTLMEWGGASEVNSQKIGLGSDVMVPWLGKIGLNLYGTYDSNKKDWNGYQISTNWFKPFYFFENGSFISYQGYIDWQFGMKDEYSSSSYGGAMFNGIYWHSDRFAVGYGLKGYKNIYGIKEVNGVDSTGFGHYIAVTYKF</sequence>